<name>FABV_RUMCH</name>
<reference key="1">
    <citation type="submission" date="2009-01" db="EMBL/GenBank/DDBJ databases">
        <title>Complete sequence of Clostridium cellulolyticum H10.</title>
        <authorList>
            <consortium name="US DOE Joint Genome Institute"/>
            <person name="Lucas S."/>
            <person name="Copeland A."/>
            <person name="Lapidus A."/>
            <person name="Glavina del Rio T."/>
            <person name="Dalin E."/>
            <person name="Tice H."/>
            <person name="Bruce D."/>
            <person name="Goodwin L."/>
            <person name="Pitluck S."/>
            <person name="Chertkov O."/>
            <person name="Saunders E."/>
            <person name="Brettin T."/>
            <person name="Detter J.C."/>
            <person name="Han C."/>
            <person name="Larimer F."/>
            <person name="Land M."/>
            <person name="Hauser L."/>
            <person name="Kyrpides N."/>
            <person name="Ivanova N."/>
            <person name="Zhou J."/>
            <person name="Richardson P."/>
        </authorList>
    </citation>
    <scope>NUCLEOTIDE SEQUENCE [LARGE SCALE GENOMIC DNA]</scope>
    <source>
        <strain>ATCC 35319 / DSM 5812 / JCM 6584 / H10</strain>
    </source>
</reference>
<gene>
    <name evidence="1" type="primary">fabV</name>
    <name type="ordered locus">Ccel_2273</name>
</gene>
<protein>
    <recommendedName>
        <fullName evidence="1">Trans-2-enoyl-CoA reductase [NADH]</fullName>
        <shortName evidence="1">TER</shortName>
        <ecNumber evidence="1">1.3.1.44</ecNumber>
    </recommendedName>
</protein>
<evidence type="ECO:0000255" key="1">
    <source>
        <dbReference type="HAMAP-Rule" id="MF_01838"/>
    </source>
</evidence>
<accession>B8I4V6</accession>
<keyword id="KW-0275">Fatty acid biosynthesis</keyword>
<keyword id="KW-0276">Fatty acid metabolism</keyword>
<keyword id="KW-0444">Lipid biosynthesis</keyword>
<keyword id="KW-0443">Lipid metabolism</keyword>
<keyword id="KW-0520">NAD</keyword>
<keyword id="KW-0560">Oxidoreductase</keyword>
<keyword id="KW-1185">Reference proteome</keyword>
<organism>
    <name type="scientific">Ruminiclostridium cellulolyticum (strain ATCC 35319 / DSM 5812 / JCM 6584 / H10)</name>
    <name type="common">Clostridium cellulolyticum</name>
    <dbReference type="NCBI Taxonomy" id="394503"/>
    <lineage>
        <taxon>Bacteria</taxon>
        <taxon>Bacillati</taxon>
        <taxon>Bacillota</taxon>
        <taxon>Clostridia</taxon>
        <taxon>Eubacteriales</taxon>
        <taxon>Oscillospiraceae</taxon>
        <taxon>Ruminiclostridium</taxon>
    </lineage>
</organism>
<feature type="chain" id="PRO_1000188361" description="Trans-2-enoyl-CoA reductase [NADH]">
    <location>
        <begin position="1"/>
        <end position="395"/>
    </location>
</feature>
<feature type="active site" description="Proton donor" evidence="1">
    <location>
        <position position="234"/>
    </location>
</feature>
<feature type="binding site" evidence="1">
    <location>
        <begin position="47"/>
        <end position="52"/>
    </location>
    <ligand>
        <name>NAD(+)</name>
        <dbReference type="ChEBI" id="CHEBI:57540"/>
    </ligand>
</feature>
<feature type="binding site" evidence="1">
    <location>
        <begin position="73"/>
        <end position="74"/>
    </location>
    <ligand>
        <name>NAD(+)</name>
        <dbReference type="ChEBI" id="CHEBI:57540"/>
    </ligand>
</feature>
<feature type="binding site" evidence="1">
    <location>
        <begin position="110"/>
        <end position="111"/>
    </location>
    <ligand>
        <name>NAD(+)</name>
        <dbReference type="ChEBI" id="CHEBI:57540"/>
    </ligand>
</feature>
<feature type="binding site" evidence="1">
    <location>
        <begin position="138"/>
        <end position="139"/>
    </location>
    <ligand>
        <name>NAD(+)</name>
        <dbReference type="ChEBI" id="CHEBI:57540"/>
    </ligand>
</feature>
<feature type="binding site" evidence="1">
    <location>
        <position position="224"/>
    </location>
    <ligand>
        <name>substrate</name>
    </ligand>
</feature>
<feature type="binding site" evidence="1">
    <location>
        <position position="243"/>
    </location>
    <ligand>
        <name>NAD(+)</name>
        <dbReference type="ChEBI" id="CHEBI:57540"/>
    </ligand>
</feature>
<feature type="binding site" evidence="1">
    <location>
        <begin position="272"/>
        <end position="274"/>
    </location>
    <ligand>
        <name>NAD(+)</name>
        <dbReference type="ChEBI" id="CHEBI:57540"/>
    </ligand>
</feature>
<feature type="site" description="Plays an important role in discriminating NADH against NADPH" evidence="1">
    <location>
        <position position="74"/>
    </location>
</feature>
<proteinExistence type="inferred from homology"/>
<dbReference type="EC" id="1.3.1.44" evidence="1"/>
<dbReference type="EMBL" id="CP001348">
    <property type="protein sequence ID" value="ACL76610.1"/>
    <property type="molecule type" value="Genomic_DNA"/>
</dbReference>
<dbReference type="RefSeq" id="WP_015925702.1">
    <property type="nucleotide sequence ID" value="NC_011898.1"/>
</dbReference>
<dbReference type="SMR" id="B8I4V6"/>
<dbReference type="STRING" id="394503.Ccel_2273"/>
<dbReference type="KEGG" id="cce:Ccel_2273"/>
<dbReference type="eggNOG" id="COG3007">
    <property type="taxonomic scope" value="Bacteria"/>
</dbReference>
<dbReference type="HOGENOM" id="CLU_057698_1_0_9"/>
<dbReference type="OrthoDB" id="9802260at2"/>
<dbReference type="UniPathway" id="UPA00094"/>
<dbReference type="Proteomes" id="UP000001349">
    <property type="component" value="Chromosome"/>
</dbReference>
<dbReference type="GO" id="GO:0004318">
    <property type="term" value="F:enoyl-[acyl-carrier-protein] reductase (NADH) activity"/>
    <property type="evidence" value="ECO:0007669"/>
    <property type="project" value="TreeGrafter"/>
</dbReference>
<dbReference type="GO" id="GO:0051287">
    <property type="term" value="F:NAD binding"/>
    <property type="evidence" value="ECO:0007669"/>
    <property type="project" value="UniProtKB-UniRule"/>
</dbReference>
<dbReference type="GO" id="GO:0050343">
    <property type="term" value="F:trans-2-enoyl-CoA reductase (NADH) activity"/>
    <property type="evidence" value="ECO:0007669"/>
    <property type="project" value="UniProtKB-UniRule"/>
</dbReference>
<dbReference type="GO" id="GO:0006633">
    <property type="term" value="P:fatty acid biosynthetic process"/>
    <property type="evidence" value="ECO:0007669"/>
    <property type="project" value="UniProtKB-UniRule"/>
</dbReference>
<dbReference type="FunFam" id="3.40.50.720:FF:000221">
    <property type="entry name" value="Enoyl-[acyl-carrier-protein] reductase [NADH]"/>
    <property type="match status" value="1"/>
</dbReference>
<dbReference type="Gene3D" id="3.40.50.720">
    <property type="entry name" value="NAD(P)-binding Rossmann-like Domain"/>
    <property type="match status" value="1"/>
</dbReference>
<dbReference type="HAMAP" id="MF_01838">
    <property type="entry name" value="FabV_reductase"/>
    <property type="match status" value="1"/>
</dbReference>
<dbReference type="InterPro" id="IPR024906">
    <property type="entry name" value="Eno_Rdtase_FAD-bd_dom"/>
</dbReference>
<dbReference type="InterPro" id="IPR024910">
    <property type="entry name" value="Enoyl-CoA_Rdtase_cat_dom"/>
</dbReference>
<dbReference type="InterPro" id="IPR050048">
    <property type="entry name" value="FabV-like_NADH_b"/>
</dbReference>
<dbReference type="InterPro" id="IPR010758">
    <property type="entry name" value="Trans-2-enoyl-CoA_reductase"/>
</dbReference>
<dbReference type="NCBIfam" id="NF043048">
    <property type="entry name" value="EnoyACPredFabV"/>
    <property type="match status" value="1"/>
</dbReference>
<dbReference type="NCBIfam" id="NF010177">
    <property type="entry name" value="PRK13656.1"/>
    <property type="match status" value="1"/>
</dbReference>
<dbReference type="PANTHER" id="PTHR37480">
    <property type="entry name" value="ENOYL-[ACYL-CARRIER-PROTEIN] REDUCTASE [NADH]"/>
    <property type="match status" value="1"/>
</dbReference>
<dbReference type="PANTHER" id="PTHR37480:SF1">
    <property type="entry name" value="ENOYL-[ACYL-CARRIER-PROTEIN] REDUCTASE [NADH]"/>
    <property type="match status" value="1"/>
</dbReference>
<dbReference type="Pfam" id="PF07055">
    <property type="entry name" value="Eno-Rase_FAD_bd"/>
    <property type="match status" value="1"/>
</dbReference>
<dbReference type="Pfam" id="PF12242">
    <property type="entry name" value="Eno-Rase_NADH_b"/>
    <property type="match status" value="1"/>
</dbReference>
<dbReference type="Pfam" id="PF12241">
    <property type="entry name" value="Enoyl_reductase"/>
    <property type="match status" value="1"/>
</dbReference>
<sequence length="395" mass="44116">MIVTPKFRGFICTTSHPVGCEYSVMNQVEYIKNQKKINGAKKVLVIGASTGYGLASRITAAFGCGAATIGIFFERPGSKNKTASAGWYNSAAFEKMAKEEGLYAKSINGDAFSNEIKQKTIDLIKKDLGKVDMVVYSLASPRRTHPVTGEVFNSVIKPIREAYTSKTVDFHTQLVSETTIEPASDDEIRQTIAVMGGEDWSMWMDALKKADVLEDNVMTLAYSYVGPEVTHSVYREGTIGKAKDDLEATAIKINENLRTIGGKAYVSINKAVVTQASAAIPVISLYVSALFKVMKEKNIHEGCIEQMYRMFNDRLYSGDLKLDSKGRICMDDLEMRPEVQNEVTKLWNEANNDNVKDITDIEGYRREFFRLFGFEFEDVDYNADVDIEVNIEGLY</sequence>
<comment type="function">
    <text evidence="1">Involved in the fatty acid synthesis (FAS II). Catalyzes the reduction of a carbon-carbon double bond in an enoyl moiety that is covalently linked to a coenzyme A (CoA).</text>
</comment>
<comment type="catalytic activity">
    <reaction evidence="1">
        <text>a 2,3-saturated acyl-CoA + NAD(+) = a (2E)-enoyl-CoA + NADH + H(+)</text>
        <dbReference type="Rhea" id="RHEA:18177"/>
        <dbReference type="ChEBI" id="CHEBI:15378"/>
        <dbReference type="ChEBI" id="CHEBI:57540"/>
        <dbReference type="ChEBI" id="CHEBI:57945"/>
        <dbReference type="ChEBI" id="CHEBI:58856"/>
        <dbReference type="ChEBI" id="CHEBI:65111"/>
        <dbReference type="EC" id="1.3.1.44"/>
    </reaction>
</comment>
<comment type="pathway">
    <text evidence="1">Lipid metabolism; fatty acid biosynthesis.</text>
</comment>
<comment type="subunit">
    <text evidence="1">Monomer.</text>
</comment>
<comment type="similarity">
    <text evidence="1">Belongs to the TER reductase family.</text>
</comment>